<evidence type="ECO:0000250" key="1">
    <source>
        <dbReference type="UniProtKB" id="P08839"/>
    </source>
</evidence>
<evidence type="ECO:0000250" key="2">
    <source>
        <dbReference type="UniProtKB" id="P23533"/>
    </source>
</evidence>
<evidence type="ECO:0000305" key="3"/>
<gene>
    <name type="primary">ptsI</name>
    <name type="ordered locus">LL0118</name>
    <name type="ORF">L120628</name>
</gene>
<sequence>MTTMLKGIAASSGVAVAKAYLLVQPDLSFETKTIADTANEEARLDAALATSQSELQLIKDKAVTTLGEEAASVFDAHMMVLADPDMTAQIKAVINDKKVNAESALKEVTDMFIGIFEGMTDNAYMQERAADIKDVTKRVLAHLLGVKLPSPALIDEEVIIVAEDLTPSDTAQLDKKFVKAFVTNIGGRTSHSAIMARTLEIPAVLGTNNITELVSEGQLLAVSGLTGEVILDPSTEQQSEFHKAGEAYAAQKAEWAALKDAETVTADGRHYELAANIGTPKDVEGVNDNGAEAIGLYRTEFLYMDAQDFPTEDDQYEAYKAVLEGMNGKPVVVRTMDIGGDKTLPYFDLPKEMNPFLGWRALRISLSTAGDGMFRTQLRALLRASVHGQLRIMFPMVALVTEFRAAKKIYDEEKAKLIAEGVPVADGIEVGIMIEIPAAAMLADQFAKEVDFFSIGTNDLIQYTMAADRMNEQVSYLYQPYNPSILRLINNVIKAAHAEGKWAGMCGEMAGDQTAVPLLMGMGLDEFSMSATSVLQTRSLMKRLDSKKMEELSSKALSECATMEEVIALVEEYTK</sequence>
<accession>Q9CJ82</accession>
<protein>
    <recommendedName>
        <fullName evidence="1">Phosphoenolpyruvate-protein phosphotransferase</fullName>
        <ecNumber evidence="1">2.7.3.9</ecNumber>
    </recommendedName>
    <alternativeName>
        <fullName evidence="1">Phosphotransferase system, enzyme I</fullName>
    </alternativeName>
</protein>
<keyword id="KW-0963">Cytoplasm</keyword>
<keyword id="KW-0418">Kinase</keyword>
<keyword id="KW-0460">Magnesium</keyword>
<keyword id="KW-0479">Metal-binding</keyword>
<keyword id="KW-0598">Phosphotransferase system</keyword>
<keyword id="KW-1185">Reference proteome</keyword>
<keyword id="KW-0762">Sugar transport</keyword>
<keyword id="KW-0808">Transferase</keyword>
<keyword id="KW-0813">Transport</keyword>
<name>PT1_LACLA</name>
<dbReference type="EC" id="2.7.3.9" evidence="1"/>
<dbReference type="EMBL" id="AE005176">
    <property type="protein sequence ID" value="AAK04216.1"/>
    <property type="molecule type" value="Genomic_DNA"/>
</dbReference>
<dbReference type="PIR" id="F86639">
    <property type="entry name" value="F86639"/>
</dbReference>
<dbReference type="RefSeq" id="NP_266274.1">
    <property type="nucleotide sequence ID" value="NC_002662.1"/>
</dbReference>
<dbReference type="SMR" id="Q9CJ82"/>
<dbReference type="PaxDb" id="272623-L120628"/>
<dbReference type="EnsemblBacteria" id="AAK04216">
    <property type="protein sequence ID" value="AAK04216"/>
    <property type="gene ID" value="L120628"/>
</dbReference>
<dbReference type="KEGG" id="lla:L120628"/>
<dbReference type="PATRIC" id="fig|272623.7.peg.132"/>
<dbReference type="eggNOG" id="COG1080">
    <property type="taxonomic scope" value="Bacteria"/>
</dbReference>
<dbReference type="HOGENOM" id="CLU_007308_7_0_9"/>
<dbReference type="OrthoDB" id="9765468at2"/>
<dbReference type="Proteomes" id="UP000002196">
    <property type="component" value="Chromosome"/>
</dbReference>
<dbReference type="GO" id="GO:0005737">
    <property type="term" value="C:cytoplasm"/>
    <property type="evidence" value="ECO:0007669"/>
    <property type="project" value="UniProtKB-SubCell"/>
</dbReference>
<dbReference type="GO" id="GO:0016301">
    <property type="term" value="F:kinase activity"/>
    <property type="evidence" value="ECO:0007669"/>
    <property type="project" value="UniProtKB-KW"/>
</dbReference>
<dbReference type="GO" id="GO:0046872">
    <property type="term" value="F:metal ion binding"/>
    <property type="evidence" value="ECO:0007669"/>
    <property type="project" value="UniProtKB-KW"/>
</dbReference>
<dbReference type="GO" id="GO:0008965">
    <property type="term" value="F:phosphoenolpyruvate-protein phosphotransferase activity"/>
    <property type="evidence" value="ECO:0007669"/>
    <property type="project" value="UniProtKB-EC"/>
</dbReference>
<dbReference type="GO" id="GO:0009401">
    <property type="term" value="P:phosphoenolpyruvate-dependent sugar phosphotransferase system"/>
    <property type="evidence" value="ECO:0007669"/>
    <property type="project" value="UniProtKB-KW"/>
</dbReference>
<dbReference type="FunFam" id="1.10.274.10:FF:000001">
    <property type="entry name" value="Phosphoenolpyruvate-protein phosphotransferase"/>
    <property type="match status" value="1"/>
</dbReference>
<dbReference type="FunFam" id="3.20.20.60:FF:000007">
    <property type="entry name" value="Phosphoenolpyruvate-protein phosphotransferase"/>
    <property type="match status" value="1"/>
</dbReference>
<dbReference type="Gene3D" id="3.20.20.60">
    <property type="entry name" value="Phosphoenolpyruvate-binding domains"/>
    <property type="match status" value="1"/>
</dbReference>
<dbReference type="Gene3D" id="3.50.30.10">
    <property type="entry name" value="Phosphohistidine domain"/>
    <property type="match status" value="1"/>
</dbReference>
<dbReference type="Gene3D" id="1.10.274.10">
    <property type="entry name" value="PtsI, HPr-binding domain"/>
    <property type="match status" value="1"/>
</dbReference>
<dbReference type="InterPro" id="IPR008279">
    <property type="entry name" value="PEP-util_enz_mobile_dom"/>
</dbReference>
<dbReference type="InterPro" id="IPR050499">
    <property type="entry name" value="PEP-utilizing_PTS_enzyme"/>
</dbReference>
<dbReference type="InterPro" id="IPR018274">
    <property type="entry name" value="PEP_util_AS"/>
</dbReference>
<dbReference type="InterPro" id="IPR000121">
    <property type="entry name" value="PEP_util_C"/>
</dbReference>
<dbReference type="InterPro" id="IPR023151">
    <property type="entry name" value="PEP_util_CS"/>
</dbReference>
<dbReference type="InterPro" id="IPR036637">
    <property type="entry name" value="Phosphohistidine_dom_sf"/>
</dbReference>
<dbReference type="InterPro" id="IPR024692">
    <property type="entry name" value="PTS_EI"/>
</dbReference>
<dbReference type="InterPro" id="IPR006318">
    <property type="entry name" value="PTS_EI-like"/>
</dbReference>
<dbReference type="InterPro" id="IPR008731">
    <property type="entry name" value="PTS_EIN"/>
</dbReference>
<dbReference type="InterPro" id="IPR036618">
    <property type="entry name" value="PtsI_HPr-bd_sf"/>
</dbReference>
<dbReference type="InterPro" id="IPR015813">
    <property type="entry name" value="Pyrv/PenolPyrv_kinase-like_dom"/>
</dbReference>
<dbReference type="InterPro" id="IPR040442">
    <property type="entry name" value="Pyrv_kinase-like_dom_sf"/>
</dbReference>
<dbReference type="NCBIfam" id="TIGR01417">
    <property type="entry name" value="PTS_I_fam"/>
    <property type="match status" value="1"/>
</dbReference>
<dbReference type="PANTHER" id="PTHR46244">
    <property type="entry name" value="PHOSPHOENOLPYRUVATE-PROTEIN PHOSPHOTRANSFERASE"/>
    <property type="match status" value="1"/>
</dbReference>
<dbReference type="PANTHER" id="PTHR46244:SF3">
    <property type="entry name" value="PHOSPHOENOLPYRUVATE-PROTEIN PHOSPHOTRANSFERASE"/>
    <property type="match status" value="1"/>
</dbReference>
<dbReference type="Pfam" id="PF05524">
    <property type="entry name" value="PEP-utilisers_N"/>
    <property type="match status" value="1"/>
</dbReference>
<dbReference type="Pfam" id="PF00391">
    <property type="entry name" value="PEP-utilizers"/>
    <property type="match status" value="1"/>
</dbReference>
<dbReference type="Pfam" id="PF02896">
    <property type="entry name" value="PEP-utilizers_C"/>
    <property type="match status" value="1"/>
</dbReference>
<dbReference type="PIRSF" id="PIRSF000732">
    <property type="entry name" value="PTS_enzyme_I"/>
    <property type="match status" value="1"/>
</dbReference>
<dbReference type="PRINTS" id="PR01736">
    <property type="entry name" value="PHPHTRNFRASE"/>
</dbReference>
<dbReference type="SUPFAM" id="SSF47831">
    <property type="entry name" value="Enzyme I of the PEP:sugar phosphotransferase system HPr-binding (sub)domain"/>
    <property type="match status" value="1"/>
</dbReference>
<dbReference type="SUPFAM" id="SSF51621">
    <property type="entry name" value="Phosphoenolpyruvate/pyruvate domain"/>
    <property type="match status" value="1"/>
</dbReference>
<dbReference type="SUPFAM" id="SSF52009">
    <property type="entry name" value="Phosphohistidine domain"/>
    <property type="match status" value="1"/>
</dbReference>
<dbReference type="PROSITE" id="PS00742">
    <property type="entry name" value="PEP_ENZYMES_2"/>
    <property type="match status" value="1"/>
</dbReference>
<dbReference type="PROSITE" id="PS00370">
    <property type="entry name" value="PEP_ENZYMES_PHOS_SITE"/>
    <property type="match status" value="1"/>
</dbReference>
<feature type="chain" id="PRO_0000147070" description="Phosphoenolpyruvate-protein phosphotransferase">
    <location>
        <begin position="1"/>
        <end position="575"/>
    </location>
</feature>
<feature type="active site" description="Tele-phosphohistidine intermediate" evidence="1">
    <location>
        <position position="191"/>
    </location>
</feature>
<feature type="active site" description="Proton donor" evidence="1">
    <location>
        <position position="506"/>
    </location>
</feature>
<feature type="binding site" evidence="2">
    <location>
        <position position="298"/>
    </location>
    <ligand>
        <name>phosphoenolpyruvate</name>
        <dbReference type="ChEBI" id="CHEBI:58702"/>
    </ligand>
</feature>
<feature type="binding site" evidence="1">
    <location>
        <position position="334"/>
    </location>
    <ligand>
        <name>phosphoenolpyruvate</name>
        <dbReference type="ChEBI" id="CHEBI:58702"/>
    </ligand>
</feature>
<feature type="binding site" evidence="1">
    <location>
        <position position="435"/>
    </location>
    <ligand>
        <name>Mg(2+)</name>
        <dbReference type="ChEBI" id="CHEBI:18420"/>
    </ligand>
</feature>
<feature type="binding site" evidence="1">
    <location>
        <begin position="458"/>
        <end position="459"/>
    </location>
    <ligand>
        <name>phosphoenolpyruvate</name>
        <dbReference type="ChEBI" id="CHEBI:58702"/>
    </ligand>
</feature>
<feature type="binding site" evidence="1">
    <location>
        <position position="459"/>
    </location>
    <ligand>
        <name>Mg(2+)</name>
        <dbReference type="ChEBI" id="CHEBI:18420"/>
    </ligand>
</feature>
<feature type="binding site" evidence="2">
    <location>
        <position position="469"/>
    </location>
    <ligand>
        <name>phosphoenolpyruvate</name>
        <dbReference type="ChEBI" id="CHEBI:58702"/>
    </ligand>
</feature>
<reference key="1">
    <citation type="journal article" date="2001" name="Genome Res.">
        <title>The complete genome sequence of the lactic acid bacterium Lactococcus lactis ssp. lactis IL1403.</title>
        <authorList>
            <person name="Bolotin A."/>
            <person name="Wincker P."/>
            <person name="Mauger S."/>
            <person name="Jaillon O."/>
            <person name="Malarme K."/>
            <person name="Weissenbach J."/>
            <person name="Ehrlich S.D."/>
            <person name="Sorokin A."/>
        </authorList>
    </citation>
    <scope>NUCLEOTIDE SEQUENCE [LARGE SCALE GENOMIC DNA]</scope>
    <source>
        <strain>IL1403</strain>
    </source>
</reference>
<organism>
    <name type="scientific">Lactococcus lactis subsp. lactis (strain IL1403)</name>
    <name type="common">Streptococcus lactis</name>
    <dbReference type="NCBI Taxonomy" id="272623"/>
    <lineage>
        <taxon>Bacteria</taxon>
        <taxon>Bacillati</taxon>
        <taxon>Bacillota</taxon>
        <taxon>Bacilli</taxon>
        <taxon>Lactobacillales</taxon>
        <taxon>Streptococcaceae</taxon>
        <taxon>Lactococcus</taxon>
    </lineage>
</organism>
<proteinExistence type="inferred from homology"/>
<comment type="function">
    <text evidence="1">General (non sugar-specific) component of the phosphoenolpyruvate-dependent sugar phosphotransferase system (sugar PTS). This major carbohydrate active-transport system catalyzes the phosphorylation of incoming sugar substrates concomitantly with their translocation across the cell membrane. Enzyme I transfers the phosphoryl group from phosphoenolpyruvate (PEP) to the phosphoryl carrier protein (HPr).</text>
</comment>
<comment type="catalytic activity">
    <reaction evidence="1">
        <text>L-histidyl-[protein] + phosphoenolpyruvate = N(pros)-phospho-L-histidyl-[protein] + pyruvate</text>
        <dbReference type="Rhea" id="RHEA:23880"/>
        <dbReference type="Rhea" id="RHEA-COMP:9745"/>
        <dbReference type="Rhea" id="RHEA-COMP:9746"/>
        <dbReference type="ChEBI" id="CHEBI:15361"/>
        <dbReference type="ChEBI" id="CHEBI:29979"/>
        <dbReference type="ChEBI" id="CHEBI:58702"/>
        <dbReference type="ChEBI" id="CHEBI:64837"/>
        <dbReference type="EC" id="2.7.3.9"/>
    </reaction>
</comment>
<comment type="cofactor">
    <cofactor evidence="1">
        <name>Mg(2+)</name>
        <dbReference type="ChEBI" id="CHEBI:18420"/>
    </cofactor>
</comment>
<comment type="subunit">
    <text evidence="1">Homodimer.</text>
</comment>
<comment type="subcellular location">
    <subcellularLocation>
        <location evidence="3">Cytoplasm</location>
    </subcellularLocation>
</comment>
<comment type="domain">
    <text evidence="1">The N-terminal domain contains the HPr binding site, the central domain the pyrophosphate/phosphate carrier histidine, and the C-terminal domain the pyruvate binding site.</text>
</comment>
<comment type="miscellaneous">
    <text evidence="1">The reaction takes place in three steps, mediated by a phosphocarrier histidine residue located on the surface of the central domain. The two first partial reactions are catalyzed at an active site located on the N-terminal domain, and the third partial reaction is catalyzed at an active site located on the C-terminal domain. For catalytic turnover, the central domain swivels from the concave surface of the N-terminal domain to that of the C-terminal domain.</text>
</comment>
<comment type="similarity">
    <text evidence="3">Belongs to the PEP-utilizing enzyme family.</text>
</comment>